<accession>B6JGF2</accession>
<accession>F8BWJ6</accession>
<sequence length="229" mass="25496">MLICIPDILDKAEVADFRRVMDAAEWEDGRSTAGAQSAMVKRNEQLPPDSDVARALGQRVLSALTRSPLFISAAIPLHIFPPLFNRYASSNGHHFGVHVDNAVRGDRLTGLRIRTDLSVTLFLSEPEDYDGGVLTVEDYYGSHEVKLPAGHLVLYPASSLHLVTPVTRGTRVASFFWLQSMVRDAHARSMIFDLDTAVQALVERLGRDDPETVKLTGIYHNLIRYWADV</sequence>
<gene>
    <name type="ordered locus">OCAR_6723</name>
    <name type="ordered locus">OCA5_c13470</name>
</gene>
<evidence type="ECO:0000255" key="1">
    <source>
        <dbReference type="HAMAP-Rule" id="MF_00657"/>
    </source>
</evidence>
<name>Y6723_AFIC5</name>
<comment type="cofactor">
    <cofactor evidence="1">
        <name>Fe(2+)</name>
        <dbReference type="ChEBI" id="CHEBI:29033"/>
    </cofactor>
    <text evidence="1">Binds 1 Fe(2+) ion per subunit.</text>
</comment>
<comment type="cofactor">
    <cofactor evidence="1">
        <name>L-ascorbate</name>
        <dbReference type="ChEBI" id="CHEBI:38290"/>
    </cofactor>
</comment>
<feature type="chain" id="PRO_1000131216" description="PKHD-type hydroxylase OCAR_6723/OCA5_c13470">
    <location>
        <begin position="1"/>
        <end position="229"/>
    </location>
</feature>
<feature type="domain" description="Fe2OG dioxygenase" evidence="1">
    <location>
        <begin position="78"/>
        <end position="180"/>
    </location>
</feature>
<feature type="binding site" evidence="1">
    <location>
        <position position="98"/>
    </location>
    <ligand>
        <name>Fe cation</name>
        <dbReference type="ChEBI" id="CHEBI:24875"/>
    </ligand>
</feature>
<feature type="binding site" evidence="1">
    <location>
        <position position="100"/>
    </location>
    <ligand>
        <name>Fe cation</name>
        <dbReference type="ChEBI" id="CHEBI:24875"/>
    </ligand>
</feature>
<feature type="binding site" evidence="1">
    <location>
        <position position="161"/>
    </location>
    <ligand>
        <name>Fe cation</name>
        <dbReference type="ChEBI" id="CHEBI:24875"/>
    </ligand>
</feature>
<feature type="binding site" evidence="1">
    <location>
        <position position="171"/>
    </location>
    <ligand>
        <name>2-oxoglutarate</name>
        <dbReference type="ChEBI" id="CHEBI:16810"/>
    </ligand>
</feature>
<reference key="1">
    <citation type="journal article" date="2008" name="J. Bacteriol.">
        <title>Genome sequence of the chemolithoautotrophic bacterium Oligotropha carboxidovorans OM5T.</title>
        <authorList>
            <person name="Paul D."/>
            <person name="Bridges S."/>
            <person name="Burgess S.C."/>
            <person name="Dandass Y."/>
            <person name="Lawrence M.L."/>
        </authorList>
    </citation>
    <scope>NUCLEOTIDE SEQUENCE [LARGE SCALE GENOMIC DNA]</scope>
    <source>
        <strain>ATCC 49405 / DSM 1227 / KCTC 32145 / OM5</strain>
    </source>
</reference>
<reference key="2">
    <citation type="journal article" date="2011" name="J. Bacteriol.">
        <title>Complete genome sequences of the chemolithoautotrophic Oligotropha carboxidovorans strains OM4 and OM5.</title>
        <authorList>
            <person name="Volland S."/>
            <person name="Rachinger M."/>
            <person name="Strittmatter A."/>
            <person name="Daniel R."/>
            <person name="Gottschalk G."/>
            <person name="Meyer O."/>
        </authorList>
    </citation>
    <scope>NUCLEOTIDE SEQUENCE [LARGE SCALE GENOMIC DNA]</scope>
    <source>
        <strain>ATCC 49405 / DSM 1227 / KCTC 32145 / OM5</strain>
    </source>
</reference>
<keyword id="KW-0223">Dioxygenase</keyword>
<keyword id="KW-0408">Iron</keyword>
<keyword id="KW-0479">Metal-binding</keyword>
<keyword id="KW-0560">Oxidoreductase</keyword>
<keyword id="KW-1185">Reference proteome</keyword>
<keyword id="KW-0847">Vitamin C</keyword>
<organism>
    <name type="scientific">Afipia carboxidovorans (strain ATCC 49405 / DSM 1227 / KCTC 32145 / OM5)</name>
    <name type="common">Oligotropha carboxidovorans</name>
    <dbReference type="NCBI Taxonomy" id="504832"/>
    <lineage>
        <taxon>Bacteria</taxon>
        <taxon>Pseudomonadati</taxon>
        <taxon>Pseudomonadota</taxon>
        <taxon>Alphaproteobacteria</taxon>
        <taxon>Hyphomicrobiales</taxon>
        <taxon>Nitrobacteraceae</taxon>
        <taxon>Afipia</taxon>
    </lineage>
</organism>
<proteinExistence type="inferred from homology"/>
<protein>
    <recommendedName>
        <fullName evidence="1">PKHD-type hydroxylase OCAR_6723/OCA5_c13470</fullName>
        <ecNumber evidence="1">1.14.11.-</ecNumber>
    </recommendedName>
</protein>
<dbReference type="EC" id="1.14.11.-" evidence="1"/>
<dbReference type="EMBL" id="CP001196">
    <property type="protein sequence ID" value="ACI93834.1"/>
    <property type="molecule type" value="Genomic_DNA"/>
</dbReference>
<dbReference type="EMBL" id="CP002826">
    <property type="protein sequence ID" value="AEI06063.1"/>
    <property type="molecule type" value="Genomic_DNA"/>
</dbReference>
<dbReference type="RefSeq" id="WP_012563860.1">
    <property type="nucleotide sequence ID" value="NC_015684.1"/>
</dbReference>
<dbReference type="SMR" id="B6JGF2"/>
<dbReference type="STRING" id="504832.OCA5_c13470"/>
<dbReference type="KEGG" id="oca:OCAR_6723"/>
<dbReference type="KEGG" id="ocg:OCA5_c13470"/>
<dbReference type="PATRIC" id="fig|504832.7.peg.1433"/>
<dbReference type="eggNOG" id="COG3128">
    <property type="taxonomic scope" value="Bacteria"/>
</dbReference>
<dbReference type="HOGENOM" id="CLU_106663_0_0_5"/>
<dbReference type="OrthoDB" id="9812472at2"/>
<dbReference type="Proteomes" id="UP000007730">
    <property type="component" value="Chromosome"/>
</dbReference>
<dbReference type="GO" id="GO:0016706">
    <property type="term" value="F:2-oxoglutarate-dependent dioxygenase activity"/>
    <property type="evidence" value="ECO:0007669"/>
    <property type="project" value="UniProtKB-UniRule"/>
</dbReference>
<dbReference type="GO" id="GO:0005506">
    <property type="term" value="F:iron ion binding"/>
    <property type="evidence" value="ECO:0007669"/>
    <property type="project" value="UniProtKB-UniRule"/>
</dbReference>
<dbReference type="GO" id="GO:0031418">
    <property type="term" value="F:L-ascorbic acid binding"/>
    <property type="evidence" value="ECO:0007669"/>
    <property type="project" value="UniProtKB-KW"/>
</dbReference>
<dbReference type="GO" id="GO:0006974">
    <property type="term" value="P:DNA damage response"/>
    <property type="evidence" value="ECO:0007669"/>
    <property type="project" value="TreeGrafter"/>
</dbReference>
<dbReference type="GO" id="GO:0006879">
    <property type="term" value="P:intracellular iron ion homeostasis"/>
    <property type="evidence" value="ECO:0007669"/>
    <property type="project" value="TreeGrafter"/>
</dbReference>
<dbReference type="Gene3D" id="2.60.120.620">
    <property type="entry name" value="q2cbj1_9rhob like domain"/>
    <property type="match status" value="1"/>
</dbReference>
<dbReference type="Gene3D" id="4.10.860.20">
    <property type="entry name" value="Rabenosyn, Rab binding domain"/>
    <property type="match status" value="1"/>
</dbReference>
<dbReference type="HAMAP" id="MF_00657">
    <property type="entry name" value="Hydroxyl_YbiX"/>
    <property type="match status" value="1"/>
</dbReference>
<dbReference type="InterPro" id="IPR005123">
    <property type="entry name" value="Oxoglu/Fe-dep_dioxygenase_dom"/>
</dbReference>
<dbReference type="InterPro" id="IPR041097">
    <property type="entry name" value="PKHD_C"/>
</dbReference>
<dbReference type="InterPro" id="IPR023550">
    <property type="entry name" value="PKHD_hydroxylase"/>
</dbReference>
<dbReference type="InterPro" id="IPR006620">
    <property type="entry name" value="Pro_4_hyd_alph"/>
</dbReference>
<dbReference type="InterPro" id="IPR044862">
    <property type="entry name" value="Pro_4_hyd_alph_FE2OG_OXY"/>
</dbReference>
<dbReference type="NCBIfam" id="NF003973">
    <property type="entry name" value="PRK05467.1-2"/>
    <property type="match status" value="1"/>
</dbReference>
<dbReference type="NCBIfam" id="NF003974">
    <property type="entry name" value="PRK05467.1-3"/>
    <property type="match status" value="1"/>
</dbReference>
<dbReference type="NCBIfam" id="NF003975">
    <property type="entry name" value="PRK05467.1-4"/>
    <property type="match status" value="1"/>
</dbReference>
<dbReference type="PANTHER" id="PTHR41536">
    <property type="entry name" value="PKHD-TYPE HYDROXYLASE YBIX"/>
    <property type="match status" value="1"/>
</dbReference>
<dbReference type="PANTHER" id="PTHR41536:SF1">
    <property type="entry name" value="PKHD-TYPE HYDROXYLASE YBIX"/>
    <property type="match status" value="1"/>
</dbReference>
<dbReference type="Pfam" id="PF13640">
    <property type="entry name" value="2OG-FeII_Oxy_3"/>
    <property type="match status" value="1"/>
</dbReference>
<dbReference type="Pfam" id="PF18331">
    <property type="entry name" value="PKHD_C"/>
    <property type="match status" value="1"/>
</dbReference>
<dbReference type="SMART" id="SM00702">
    <property type="entry name" value="P4Hc"/>
    <property type="match status" value="1"/>
</dbReference>
<dbReference type="PROSITE" id="PS51471">
    <property type="entry name" value="FE2OG_OXY"/>
    <property type="match status" value="1"/>
</dbReference>